<keyword id="KW-0067">ATP-binding</keyword>
<keyword id="KW-0997">Cell inner membrane</keyword>
<keyword id="KW-1003">Cell membrane</keyword>
<keyword id="KW-0472">Membrane</keyword>
<keyword id="KW-0547">Nucleotide-binding</keyword>
<keyword id="KW-0571">Peptide transport</keyword>
<keyword id="KW-0653">Protein transport</keyword>
<keyword id="KW-1185">Reference proteome</keyword>
<keyword id="KW-1278">Translocase</keyword>
<keyword id="KW-0813">Transport</keyword>
<organism>
    <name type="scientific">Brucella abortus (strain 2308)</name>
    <dbReference type="NCBI Taxonomy" id="359391"/>
    <lineage>
        <taxon>Bacteria</taxon>
        <taxon>Pseudomonadati</taxon>
        <taxon>Pseudomonadota</taxon>
        <taxon>Alphaproteobacteria</taxon>
        <taxon>Hyphomicrobiales</taxon>
        <taxon>Brucellaceae</taxon>
        <taxon>Brucella/Ochrobactrum group</taxon>
        <taxon>Brucella</taxon>
    </lineage>
</organism>
<proteinExistence type="inferred from homology"/>
<comment type="function">
    <text evidence="1">Probably part of an ABC transporter complex that could be involved in peptide import. Probably responsible for energy coupling to the transport system (By similarity).</text>
</comment>
<comment type="subunit">
    <text evidence="3">The complex is composed of two ATP-binding proteins (BAB2_0817 and BAB2_0818), two transmembrane proteins (BAB2_0815) and a solute-binding protein (BAB2_0812).</text>
</comment>
<comment type="subcellular location">
    <subcellularLocation>
        <location evidence="3">Cell inner membrane</location>
        <topology evidence="3">Peripheral membrane protein</topology>
    </subcellularLocation>
</comment>
<comment type="similarity">
    <text evidence="3">Belongs to the ABC transporter superfamily.</text>
</comment>
<gene>
    <name type="ordered locus">BAB2_0817</name>
</gene>
<sequence length="338" mass="36751">MSRQPILDIEGLRTVFRTRAREIVAVNDVDIVVNPGETVALVGESGSGKSVTSLSIMRLLARKVGFIDAGSIILRGKSGQTVDLAAIDEEAMRRIRGNDIGMVFQEPMTSLNPVYTIGDQIGEPLRVHRGTSRREALEAAVELLDRVGIPDARRRAGQYPHELSGGMRQRATIAMALICNPTFLIADEPTTALDVTIQAQILDLMQKLQSESGMGMLFVTHNLGVVAEIAQRVVVMYAGRIVESGPVKEVFRNPRHPYTMGLLRSMPRLGDATEMKRRGEKLNTIPGMVPGLANLPSGCAFAPRCSFAVEACHAAVPPLASVNEHHGSRCIRWQEIAA</sequence>
<feature type="chain" id="PRO_0000328695" description="Putative peptide import ATP-binding protein BAB2_0817">
    <location>
        <begin position="1"/>
        <end position="338"/>
    </location>
</feature>
<feature type="domain" description="ABC transporter" evidence="2">
    <location>
        <begin position="7"/>
        <end position="263"/>
    </location>
</feature>
<feature type="binding site" evidence="2">
    <location>
        <begin position="43"/>
        <end position="50"/>
    </location>
    <ligand>
        <name>ATP</name>
        <dbReference type="ChEBI" id="CHEBI:30616"/>
    </ligand>
</feature>
<evidence type="ECO:0000250" key="1"/>
<evidence type="ECO:0000255" key="2">
    <source>
        <dbReference type="PROSITE-ProRule" id="PRU00434"/>
    </source>
</evidence>
<evidence type="ECO:0000305" key="3"/>
<protein>
    <recommendedName>
        <fullName>Putative peptide import ATP-binding protein BAB2_0817</fullName>
        <ecNumber>7.4.2.-</ecNumber>
    </recommendedName>
</protein>
<reference key="1">
    <citation type="journal article" date="2005" name="Infect. Immun.">
        <title>Whole-genome analyses of speciation events in pathogenic Brucellae.</title>
        <authorList>
            <person name="Chain P.S."/>
            <person name="Comerci D.J."/>
            <person name="Tolmasky M.E."/>
            <person name="Larimer F.W."/>
            <person name="Malfatti S.A."/>
            <person name="Vergez L.M."/>
            <person name="Aguero F."/>
            <person name="Land M.L."/>
            <person name="Ugalde R.A."/>
            <person name="Garcia E."/>
        </authorList>
    </citation>
    <scope>NUCLEOTIDE SEQUENCE [LARGE SCALE GENOMIC DNA]</scope>
    <source>
        <strain>2308</strain>
    </source>
</reference>
<accession>Q2YK63</accession>
<dbReference type="EC" id="7.4.2.-"/>
<dbReference type="EMBL" id="AM040265">
    <property type="protein sequence ID" value="CAJ12983.1"/>
    <property type="molecule type" value="Genomic_DNA"/>
</dbReference>
<dbReference type="RefSeq" id="WP_002967326.1">
    <property type="nucleotide sequence ID" value="NZ_KN046823.1"/>
</dbReference>
<dbReference type="SMR" id="Q2YK63"/>
<dbReference type="STRING" id="359391.BAB2_0817"/>
<dbReference type="KEGG" id="bmf:BAB2_0817"/>
<dbReference type="PATRIC" id="fig|359391.11.peg.508"/>
<dbReference type="HOGENOM" id="CLU_000604_1_23_5"/>
<dbReference type="PhylomeDB" id="Q2YK63"/>
<dbReference type="Proteomes" id="UP000002719">
    <property type="component" value="Chromosome II"/>
</dbReference>
<dbReference type="GO" id="GO:0005886">
    <property type="term" value="C:plasma membrane"/>
    <property type="evidence" value="ECO:0007669"/>
    <property type="project" value="UniProtKB-SubCell"/>
</dbReference>
<dbReference type="GO" id="GO:0005524">
    <property type="term" value="F:ATP binding"/>
    <property type="evidence" value="ECO:0007669"/>
    <property type="project" value="UniProtKB-KW"/>
</dbReference>
<dbReference type="GO" id="GO:0016887">
    <property type="term" value="F:ATP hydrolysis activity"/>
    <property type="evidence" value="ECO:0007669"/>
    <property type="project" value="InterPro"/>
</dbReference>
<dbReference type="GO" id="GO:0015833">
    <property type="term" value="P:peptide transport"/>
    <property type="evidence" value="ECO:0007669"/>
    <property type="project" value="UniProtKB-KW"/>
</dbReference>
<dbReference type="GO" id="GO:0015031">
    <property type="term" value="P:protein transport"/>
    <property type="evidence" value="ECO:0007669"/>
    <property type="project" value="UniProtKB-KW"/>
</dbReference>
<dbReference type="CDD" id="cd03257">
    <property type="entry name" value="ABC_NikE_OppD_transporters"/>
    <property type="match status" value="1"/>
</dbReference>
<dbReference type="FunFam" id="3.40.50.300:FF:000016">
    <property type="entry name" value="Oligopeptide ABC transporter ATP-binding component"/>
    <property type="match status" value="1"/>
</dbReference>
<dbReference type="Gene3D" id="3.40.50.300">
    <property type="entry name" value="P-loop containing nucleotide triphosphate hydrolases"/>
    <property type="match status" value="1"/>
</dbReference>
<dbReference type="InterPro" id="IPR003593">
    <property type="entry name" value="AAA+_ATPase"/>
</dbReference>
<dbReference type="InterPro" id="IPR050388">
    <property type="entry name" value="ABC_Ni/Peptide_Import"/>
</dbReference>
<dbReference type="InterPro" id="IPR003439">
    <property type="entry name" value="ABC_transporter-like_ATP-bd"/>
</dbReference>
<dbReference type="InterPro" id="IPR017871">
    <property type="entry name" value="ABC_transporter-like_CS"/>
</dbReference>
<dbReference type="InterPro" id="IPR013563">
    <property type="entry name" value="Oligopep_ABC_C"/>
</dbReference>
<dbReference type="InterPro" id="IPR027417">
    <property type="entry name" value="P-loop_NTPase"/>
</dbReference>
<dbReference type="NCBIfam" id="TIGR01727">
    <property type="entry name" value="oligo_HPY"/>
    <property type="match status" value="1"/>
</dbReference>
<dbReference type="PANTHER" id="PTHR43297:SF14">
    <property type="entry name" value="ATPASE AAA-TYPE CORE DOMAIN-CONTAINING PROTEIN"/>
    <property type="match status" value="1"/>
</dbReference>
<dbReference type="PANTHER" id="PTHR43297">
    <property type="entry name" value="OLIGOPEPTIDE TRANSPORT ATP-BINDING PROTEIN APPD"/>
    <property type="match status" value="1"/>
</dbReference>
<dbReference type="Pfam" id="PF00005">
    <property type="entry name" value="ABC_tran"/>
    <property type="match status" value="1"/>
</dbReference>
<dbReference type="Pfam" id="PF08352">
    <property type="entry name" value="oligo_HPY"/>
    <property type="match status" value="1"/>
</dbReference>
<dbReference type="SMART" id="SM00382">
    <property type="entry name" value="AAA"/>
    <property type="match status" value="1"/>
</dbReference>
<dbReference type="SUPFAM" id="SSF52540">
    <property type="entry name" value="P-loop containing nucleoside triphosphate hydrolases"/>
    <property type="match status" value="1"/>
</dbReference>
<dbReference type="PROSITE" id="PS00211">
    <property type="entry name" value="ABC_TRANSPORTER_1"/>
    <property type="match status" value="1"/>
</dbReference>
<dbReference type="PROSITE" id="PS50893">
    <property type="entry name" value="ABC_TRANSPORTER_2"/>
    <property type="match status" value="1"/>
</dbReference>
<name>Y3317_BRUA2</name>